<gene>
    <name evidence="1" type="primary">rnz</name>
    <name type="ordered locus">ABC2047</name>
</gene>
<sequence>MELHFLGTGAGVPAKKRNVSALAIRFLERNGTVWLFDCGEATQHQFLHSPLSLAAVEAIFITHLHGDHILGLPGLLSSRSFQGAETPLDIYGPKGLEAFVIQALETTKTKLRFPIRFHVLAEGRIRDEEKLSVDALALDHPVESYAFRIKEQDKPGTLDAEALKAMGVPPGPLYAQLKKGETVKLADGRIVNGSAFLDESIRGRTVVIAGDTAPVKAMEAFASGADVLVHEATFASNKKDDAHLYGHSTIADACALAKRAAVGQLILTHVSSRYARNENEYRDEAAALLPNVIIAEDLFVFELEKAGRKKRD</sequence>
<keyword id="KW-0255">Endonuclease</keyword>
<keyword id="KW-0378">Hydrolase</keyword>
<keyword id="KW-0479">Metal-binding</keyword>
<keyword id="KW-0540">Nuclease</keyword>
<keyword id="KW-1185">Reference proteome</keyword>
<keyword id="KW-0819">tRNA processing</keyword>
<keyword id="KW-0862">Zinc</keyword>
<proteinExistence type="inferred from homology"/>
<comment type="function">
    <text evidence="1">Zinc phosphodiesterase, which displays some tRNA 3'-processing endonuclease activity. Probably involved in tRNA maturation, by removing a 3'-trailer from precursor tRNA.</text>
</comment>
<comment type="catalytic activity">
    <reaction evidence="1">
        <text>Endonucleolytic cleavage of RNA, removing extra 3' nucleotides from tRNA precursor, generating 3' termini of tRNAs. A 3'-hydroxy group is left at the tRNA terminus and a 5'-phosphoryl group is left at the trailer molecule.</text>
        <dbReference type="EC" id="3.1.26.11"/>
    </reaction>
</comment>
<comment type="cofactor">
    <cofactor evidence="1">
        <name>Zn(2+)</name>
        <dbReference type="ChEBI" id="CHEBI:29105"/>
    </cofactor>
    <text evidence="1">Binds 2 Zn(2+) ions.</text>
</comment>
<comment type="subunit">
    <text evidence="1">Homodimer.</text>
</comment>
<comment type="similarity">
    <text evidence="1">Belongs to the RNase Z family.</text>
</comment>
<name>RNZ_SHOC1</name>
<protein>
    <recommendedName>
        <fullName evidence="1">Ribonuclease Z</fullName>
        <shortName evidence="1">RNase Z</shortName>
        <ecNumber evidence="1">3.1.26.11</ecNumber>
    </recommendedName>
    <alternativeName>
        <fullName evidence="1">tRNA 3 endonuclease</fullName>
    </alternativeName>
    <alternativeName>
        <fullName evidence="1">tRNase Z</fullName>
    </alternativeName>
</protein>
<accession>Q5WGC3</accession>
<organism>
    <name type="scientific">Shouchella clausii (strain KSM-K16)</name>
    <name type="common">Alkalihalobacillus clausii</name>
    <dbReference type="NCBI Taxonomy" id="66692"/>
    <lineage>
        <taxon>Bacteria</taxon>
        <taxon>Bacillati</taxon>
        <taxon>Bacillota</taxon>
        <taxon>Bacilli</taxon>
        <taxon>Bacillales</taxon>
        <taxon>Bacillaceae</taxon>
        <taxon>Shouchella</taxon>
    </lineage>
</organism>
<reference key="1">
    <citation type="submission" date="2003-10" db="EMBL/GenBank/DDBJ databases">
        <title>The complete genome sequence of the alkaliphilic Bacillus clausii KSM-K16.</title>
        <authorList>
            <person name="Takaki Y."/>
            <person name="Kageyama Y."/>
            <person name="Shimamura S."/>
            <person name="Suzuki H."/>
            <person name="Nishi S."/>
            <person name="Hatada Y."/>
            <person name="Kawai S."/>
            <person name="Ito S."/>
            <person name="Horikoshi K."/>
        </authorList>
    </citation>
    <scope>NUCLEOTIDE SEQUENCE [LARGE SCALE GENOMIC DNA]</scope>
    <source>
        <strain>KSM-K16</strain>
    </source>
</reference>
<dbReference type="EC" id="3.1.26.11" evidence="1"/>
<dbReference type="EMBL" id="AP006627">
    <property type="protein sequence ID" value="BAD64582.1"/>
    <property type="molecule type" value="Genomic_DNA"/>
</dbReference>
<dbReference type="RefSeq" id="WP_011246890.1">
    <property type="nucleotide sequence ID" value="NC_006582.1"/>
</dbReference>
<dbReference type="SMR" id="Q5WGC3"/>
<dbReference type="STRING" id="66692.ABC2047"/>
<dbReference type="KEGG" id="bcl:ABC2047"/>
<dbReference type="eggNOG" id="COG1234">
    <property type="taxonomic scope" value="Bacteria"/>
</dbReference>
<dbReference type="HOGENOM" id="CLU_031317_2_0_9"/>
<dbReference type="OrthoDB" id="9800940at2"/>
<dbReference type="Proteomes" id="UP000001168">
    <property type="component" value="Chromosome"/>
</dbReference>
<dbReference type="GO" id="GO:0042781">
    <property type="term" value="F:3'-tRNA processing endoribonuclease activity"/>
    <property type="evidence" value="ECO:0007669"/>
    <property type="project" value="UniProtKB-UniRule"/>
</dbReference>
<dbReference type="GO" id="GO:0008270">
    <property type="term" value="F:zinc ion binding"/>
    <property type="evidence" value="ECO:0007669"/>
    <property type="project" value="UniProtKB-UniRule"/>
</dbReference>
<dbReference type="CDD" id="cd07717">
    <property type="entry name" value="RNaseZ_ZiPD-like_MBL-fold"/>
    <property type="match status" value="1"/>
</dbReference>
<dbReference type="FunFam" id="3.60.15.10:FF:000002">
    <property type="entry name" value="Ribonuclease Z"/>
    <property type="match status" value="1"/>
</dbReference>
<dbReference type="Gene3D" id="3.60.15.10">
    <property type="entry name" value="Ribonuclease Z/Hydroxyacylglutathione hydrolase-like"/>
    <property type="match status" value="1"/>
</dbReference>
<dbReference type="HAMAP" id="MF_01818">
    <property type="entry name" value="RNase_Z_BN"/>
    <property type="match status" value="1"/>
</dbReference>
<dbReference type="InterPro" id="IPR001279">
    <property type="entry name" value="Metallo-B-lactamas"/>
</dbReference>
<dbReference type="InterPro" id="IPR036866">
    <property type="entry name" value="RibonucZ/Hydroxyglut_hydro"/>
</dbReference>
<dbReference type="InterPro" id="IPR013471">
    <property type="entry name" value="RNase_Z/BN"/>
</dbReference>
<dbReference type="NCBIfam" id="NF000801">
    <property type="entry name" value="PRK00055.1-3"/>
    <property type="match status" value="1"/>
</dbReference>
<dbReference type="NCBIfam" id="TIGR02651">
    <property type="entry name" value="RNase_Z"/>
    <property type="match status" value="1"/>
</dbReference>
<dbReference type="PANTHER" id="PTHR46018">
    <property type="entry name" value="ZINC PHOSPHODIESTERASE ELAC PROTEIN 1"/>
    <property type="match status" value="1"/>
</dbReference>
<dbReference type="PANTHER" id="PTHR46018:SF2">
    <property type="entry name" value="ZINC PHOSPHODIESTERASE ELAC PROTEIN 1"/>
    <property type="match status" value="1"/>
</dbReference>
<dbReference type="Pfam" id="PF12706">
    <property type="entry name" value="Lactamase_B_2"/>
    <property type="match status" value="2"/>
</dbReference>
<dbReference type="SMART" id="SM00849">
    <property type="entry name" value="Lactamase_B"/>
    <property type="match status" value="1"/>
</dbReference>
<dbReference type="SUPFAM" id="SSF56281">
    <property type="entry name" value="Metallo-hydrolase/oxidoreductase"/>
    <property type="match status" value="1"/>
</dbReference>
<feature type="chain" id="PRO_0000155848" description="Ribonuclease Z">
    <location>
        <begin position="1"/>
        <end position="312"/>
    </location>
</feature>
<feature type="active site" description="Proton acceptor" evidence="1">
    <location>
        <position position="67"/>
    </location>
</feature>
<feature type="binding site" evidence="1">
    <location>
        <position position="63"/>
    </location>
    <ligand>
        <name>Zn(2+)</name>
        <dbReference type="ChEBI" id="CHEBI:29105"/>
        <label>1</label>
        <note>catalytic</note>
    </ligand>
</feature>
<feature type="binding site" evidence="1">
    <location>
        <position position="65"/>
    </location>
    <ligand>
        <name>Zn(2+)</name>
        <dbReference type="ChEBI" id="CHEBI:29105"/>
        <label>1</label>
        <note>catalytic</note>
    </ligand>
</feature>
<feature type="binding site" evidence="1">
    <location>
        <position position="67"/>
    </location>
    <ligand>
        <name>Zn(2+)</name>
        <dbReference type="ChEBI" id="CHEBI:29105"/>
        <label>2</label>
        <note>catalytic</note>
    </ligand>
</feature>
<feature type="binding site" evidence="1">
    <location>
        <position position="68"/>
    </location>
    <ligand>
        <name>Zn(2+)</name>
        <dbReference type="ChEBI" id="CHEBI:29105"/>
        <label>2</label>
        <note>catalytic</note>
    </ligand>
</feature>
<feature type="binding site" evidence="1">
    <location>
        <position position="140"/>
    </location>
    <ligand>
        <name>Zn(2+)</name>
        <dbReference type="ChEBI" id="CHEBI:29105"/>
        <label>1</label>
        <note>catalytic</note>
    </ligand>
</feature>
<feature type="binding site" evidence="1">
    <location>
        <position position="211"/>
    </location>
    <ligand>
        <name>Zn(2+)</name>
        <dbReference type="ChEBI" id="CHEBI:29105"/>
        <label>1</label>
        <note>catalytic</note>
    </ligand>
</feature>
<feature type="binding site" evidence="1">
    <location>
        <position position="211"/>
    </location>
    <ligand>
        <name>Zn(2+)</name>
        <dbReference type="ChEBI" id="CHEBI:29105"/>
        <label>2</label>
        <note>catalytic</note>
    </ligand>
</feature>
<feature type="binding site" evidence="1">
    <location>
        <position position="269"/>
    </location>
    <ligand>
        <name>Zn(2+)</name>
        <dbReference type="ChEBI" id="CHEBI:29105"/>
        <label>2</label>
        <note>catalytic</note>
    </ligand>
</feature>
<evidence type="ECO:0000255" key="1">
    <source>
        <dbReference type="HAMAP-Rule" id="MF_01818"/>
    </source>
</evidence>